<sequence>MSSSLSQTSKYQATSVVNGLLSNLLPGVPKIRANNGKTSVNNGSTAQLIDRNLKKRVQLQNRDVHKIKKKCKLVKKKQVKKHKLDKEQLEQLAKHQVLKKHQQEGTLTDHERKYLNKLIKRNSQNLRSWDLEEEVRDELEDIQQSILKDTVSTANTDRSKRRRFKRKQFKEDIKESDFVKDHRYPGLTPGLAPVGLSDEEDSSEED</sequence>
<proteinExistence type="inferred from homology"/>
<gene>
    <name type="primary">RRT14</name>
    <name type="ORF">C1Q_04879</name>
</gene>
<reference key="1">
    <citation type="journal article" date="2009" name="Genome Res.">
        <title>Genome structure of a Saccharomyces cerevisiae strain widely used in bioethanol production.</title>
        <authorList>
            <person name="Argueso J.L."/>
            <person name="Carazzolle M.F."/>
            <person name="Mieczkowski P.A."/>
            <person name="Duarte F.M."/>
            <person name="Netto O.V.C."/>
            <person name="Missawa S.K."/>
            <person name="Galzerani F."/>
            <person name="Costa G.G.L."/>
            <person name="Vidal R.O."/>
            <person name="Noronha M.F."/>
            <person name="Dominska M."/>
            <person name="Andrietta M.G.S."/>
            <person name="Andrietta S.R."/>
            <person name="Cunha A.F."/>
            <person name="Gomes L.H."/>
            <person name="Tavares F.C.A."/>
            <person name="Alcarde A.R."/>
            <person name="Dietrich F.S."/>
            <person name="McCusker J.H."/>
            <person name="Petes T.D."/>
            <person name="Pereira G.A.G."/>
        </authorList>
    </citation>
    <scope>NUCLEOTIDE SEQUENCE [LARGE SCALE GENOMIC DNA]</scope>
    <source>
        <strain>JAY291</strain>
    </source>
</reference>
<accession>C7GWJ7</accession>
<organism>
    <name type="scientific">Saccharomyces cerevisiae (strain JAY291)</name>
    <name type="common">Baker's yeast</name>
    <dbReference type="NCBI Taxonomy" id="574961"/>
    <lineage>
        <taxon>Eukaryota</taxon>
        <taxon>Fungi</taxon>
        <taxon>Dikarya</taxon>
        <taxon>Ascomycota</taxon>
        <taxon>Saccharomycotina</taxon>
        <taxon>Saccharomycetes</taxon>
        <taxon>Saccharomycetales</taxon>
        <taxon>Saccharomycetaceae</taxon>
        <taxon>Saccharomyces</taxon>
    </lineage>
</organism>
<protein>
    <recommendedName>
        <fullName>Regulator of rDNA transcription 14</fullName>
    </recommendedName>
</protein>
<evidence type="ECO:0000250" key="1"/>
<evidence type="ECO:0000250" key="2">
    <source>
        <dbReference type="UniProtKB" id="P40470"/>
    </source>
</evidence>
<evidence type="ECO:0000256" key="3">
    <source>
        <dbReference type="SAM" id="MobiDB-lite"/>
    </source>
</evidence>
<evidence type="ECO:0000305" key="4"/>
<comment type="function">
    <text evidence="1">Involved in ribosome biogenesis, probably through modulation of rDNA transcription.</text>
</comment>
<comment type="subcellular location">
    <subcellularLocation>
        <location evidence="1">Nucleus</location>
        <location evidence="1">Nucleolus</location>
    </subcellularLocation>
</comment>
<comment type="similarity">
    <text evidence="4">Belongs to the RRT14 family.</text>
</comment>
<name>RRT14_YEAS2</name>
<dbReference type="EMBL" id="ACFL01000383">
    <property type="protein sequence ID" value="EEU04828.1"/>
    <property type="molecule type" value="Genomic_DNA"/>
</dbReference>
<dbReference type="Proteomes" id="UP000008073">
    <property type="component" value="Unassembled WGS sequence"/>
</dbReference>
<dbReference type="GO" id="GO:0005730">
    <property type="term" value="C:nucleolus"/>
    <property type="evidence" value="ECO:0007669"/>
    <property type="project" value="UniProtKB-SubCell"/>
</dbReference>
<dbReference type="InterPro" id="IPR031404">
    <property type="entry name" value="Rrt14"/>
</dbReference>
<dbReference type="Pfam" id="PF17075">
    <property type="entry name" value="RRT14"/>
    <property type="match status" value="1"/>
</dbReference>
<keyword id="KW-0539">Nucleus</keyword>
<keyword id="KW-0597">Phosphoprotein</keyword>
<keyword id="KW-0804">Transcription</keyword>
<keyword id="KW-0805">Transcription regulation</keyword>
<feature type="chain" id="PRO_0000404349" description="Regulator of rDNA transcription 14">
    <location>
        <begin position="1"/>
        <end position="206"/>
    </location>
</feature>
<feature type="region of interest" description="Disordered" evidence="3">
    <location>
        <begin position="178"/>
        <end position="206"/>
    </location>
</feature>
<feature type="compositionally biased region" description="Acidic residues" evidence="3">
    <location>
        <begin position="197"/>
        <end position="206"/>
    </location>
</feature>
<feature type="modified residue" description="Phosphoserine" evidence="2">
    <location>
        <position position="197"/>
    </location>
</feature>
<feature type="modified residue" description="Phosphoserine" evidence="2">
    <location>
        <position position="202"/>
    </location>
</feature>
<feature type="modified residue" description="Phosphoserine" evidence="2">
    <location>
        <position position="203"/>
    </location>
</feature>